<keyword id="KW-0067">ATP-binding</keyword>
<keyword id="KW-0997">Cell inner membrane</keyword>
<keyword id="KW-1003">Cell membrane</keyword>
<keyword id="KW-0472">Membrane</keyword>
<keyword id="KW-0547">Nucleotide-binding</keyword>
<keyword id="KW-1185">Reference proteome</keyword>
<keyword id="KW-1278">Translocase</keyword>
<keyword id="KW-0812">Transmembrane</keyword>
<keyword id="KW-1133">Transmembrane helix</keyword>
<keyword id="KW-0813">Transport</keyword>
<proteinExistence type="evidence at protein level"/>
<comment type="function">
    <text evidence="1 4 5 6 7">Part of the tripartite efflux system PvdRT-OpmQ required for the secretion into the extracellular milieu of the siderophore pyoverdine (PVD), which is involved in iron acquisition (PubMed:19906986, PubMed:21035449, PubMed:22187978, PubMed:23766114). This subunit binds PVD and drives its secretion by hydrolyzing ATP (By similarity). The system is responsible for export of newly synthesized PVD after the final steps of biosynthesis have taken place in the periplasm (PubMed:21035449). It is also responsible for recycling of PVD after internalization of ferri-PVD into the periplasm by the outer-membrane receptor FpvA and release of iron from PVD, thus making PVD available for new cycles of iron uptake (PubMed:19906986, PubMed:23766114). In addition, can expel unwanted metals complexed with PVD from the periplasm into the extracellular medium (PubMed:22187978).</text>
</comment>
<comment type="subunit">
    <text evidence="4 5 7">Part of the tripartite efflux system PvdRT-OpmQ, which is composed of an inner membrane component with both ATPase and permease domains, PvdT, a periplasmic membrane fusion protein, PvdR, and an outer membrane component, OpmQ.</text>
</comment>
<comment type="subcellular location">
    <subcellularLocation>
        <location evidence="10">Cell inner membrane</location>
        <topology evidence="2">Multi-pass membrane protein</topology>
    </subcellularLocation>
</comment>
<comment type="induction">
    <text evidence="4">Expression is iron-regulated and under the tight control of the PVD-specific PvdS sigma factor.</text>
</comment>
<comment type="disruption phenotype">
    <text evidence="4 5 6 7">Mutant shows reduction of extracellular PVD levels and accumulates PVD in the periplasm (PubMed:19906986). Mutant lacking PvdRT-OpmQ secretes PVD and can import ferri-PVD, but has an approximately 20-fold increase in the amount of PVD present in the periplasm (PubMed:23766114). The pvdRT-opmQ deletion mutant also accumulates newly synthesized PVD in the periplasm (PubMed:21035449). Mutant accumulates unwanted PVD-metal complexes (PubMed:22187978).</text>
</comment>
<comment type="miscellaneous">
    <text evidence="4 5 7">Was originally thought to be involved only in PVD recycling (PubMed:19906986, PubMed:23766114). It was later shown to be involved in the secretion of both newly synthesized PVD and recycled PVD (PubMed:21035449).</text>
</comment>
<comment type="similarity">
    <text evidence="9">Belongs to the ABC transporter superfamily. Macrolide exporter (TC 3.A.1.122) family.</text>
</comment>
<protein>
    <recommendedName>
        <fullName evidence="9">Pyoverdine export ATP-binding/permease protein PvdT</fullName>
        <ecNumber evidence="9">7.6.2.-</ecNumber>
    </recommendedName>
</protein>
<organism>
    <name type="scientific">Pseudomonas aeruginosa (strain ATCC 15692 / DSM 22644 / CIP 104116 / JCM 14847 / LMG 12228 / 1C / PRS 101 / PAO1)</name>
    <dbReference type="NCBI Taxonomy" id="208964"/>
    <lineage>
        <taxon>Bacteria</taxon>
        <taxon>Pseudomonadati</taxon>
        <taxon>Pseudomonadota</taxon>
        <taxon>Gammaproteobacteria</taxon>
        <taxon>Pseudomonadales</taxon>
        <taxon>Pseudomonadaceae</taxon>
        <taxon>Pseudomonas</taxon>
    </lineage>
</organism>
<name>PVDT_PSEAE</name>
<feature type="chain" id="PRO_0000269956" description="Pyoverdine export ATP-binding/permease protein PvdT">
    <location>
        <begin position="1"/>
        <end position="663"/>
    </location>
</feature>
<feature type="transmembrane region" description="Helical" evidence="2">
    <location>
        <begin position="292"/>
        <end position="312"/>
    </location>
</feature>
<feature type="transmembrane region" description="Helical" evidence="2">
    <location>
        <begin position="545"/>
        <end position="565"/>
    </location>
</feature>
<feature type="transmembrane region" description="Helical" evidence="2">
    <location>
        <begin position="598"/>
        <end position="618"/>
    </location>
</feature>
<feature type="transmembrane region" description="Helical" evidence="2">
    <location>
        <begin position="626"/>
        <end position="646"/>
    </location>
</feature>
<feature type="domain" description="ABC transporter" evidence="3">
    <location>
        <begin position="11"/>
        <end position="250"/>
    </location>
</feature>
<feature type="binding site" evidence="3">
    <location>
        <begin position="48"/>
        <end position="55"/>
    </location>
    <ligand>
        <name>ATP</name>
        <dbReference type="ChEBI" id="CHEBI:30616"/>
    </ligand>
</feature>
<feature type="sequence conflict" description="In Ref. 1; AAX16304." evidence="9" ref="1">
    <original>Q</original>
    <variation>H</variation>
    <location>
        <position position="6"/>
    </location>
</feature>
<feature type="sequence conflict" description="In Ref. 1; AAX16333/AAX16350." evidence="9" ref="1">
    <original>I</original>
    <variation>T</variation>
    <location>
        <position position="123"/>
    </location>
</feature>
<feature type="sequence conflict" description="In Ref. 1; AAX16333." evidence="9" ref="1">
    <original>E</original>
    <variation>A</variation>
    <location>
        <position position="236"/>
    </location>
</feature>
<feature type="sequence conflict" description="In Ref. 1; AAX16304." evidence="9" ref="1">
    <original>H</original>
    <variation>Q</variation>
    <location>
        <position position="240"/>
    </location>
</feature>
<reference key="1">
    <citation type="journal article" date="2005" name="J. Bacteriol.">
        <title>Evidence for diversifying selection at the pyoverdine locus of Pseudomonas aeruginosa.</title>
        <authorList>
            <person name="Smith E.E."/>
            <person name="Sims E.H."/>
            <person name="Spencer D.H."/>
            <person name="Kaul R."/>
            <person name="Olson M.V."/>
        </authorList>
    </citation>
    <scope>NUCLEOTIDE SEQUENCE [GENOMIC DNA]</scope>
    <source>
        <strain>MSH</strain>
        <strain>R'</strain>
        <strain>Serotype 13</strain>
    </source>
</reference>
<reference key="2">
    <citation type="journal article" date="2000" name="Nature">
        <title>Complete genome sequence of Pseudomonas aeruginosa PAO1, an opportunistic pathogen.</title>
        <authorList>
            <person name="Stover C.K."/>
            <person name="Pham X.-Q.T."/>
            <person name="Erwin A.L."/>
            <person name="Mizoguchi S.D."/>
            <person name="Warrener P."/>
            <person name="Hickey M.J."/>
            <person name="Brinkman F.S.L."/>
            <person name="Hufnagle W.O."/>
            <person name="Kowalik D.J."/>
            <person name="Lagrou M."/>
            <person name="Garber R.L."/>
            <person name="Goltry L."/>
            <person name="Tolentino E."/>
            <person name="Westbrock-Wadman S."/>
            <person name="Yuan Y."/>
            <person name="Brody L.L."/>
            <person name="Coulter S.N."/>
            <person name="Folger K.R."/>
            <person name="Kas A."/>
            <person name="Larbig K."/>
            <person name="Lim R.M."/>
            <person name="Smith K.A."/>
            <person name="Spencer D.H."/>
            <person name="Wong G.K.-S."/>
            <person name="Wu Z."/>
            <person name="Paulsen I.T."/>
            <person name="Reizer J."/>
            <person name="Saier M.H. Jr."/>
            <person name="Hancock R.E.W."/>
            <person name="Lory S."/>
            <person name="Olson M.V."/>
        </authorList>
    </citation>
    <scope>NUCLEOTIDE SEQUENCE [LARGE SCALE GENOMIC DNA]</scope>
    <source>
        <strain>ATCC 15692 / DSM 22644 / CIP 104116 / JCM 14847 / LMG 12228 / 1C / PRS 101 / PAO1</strain>
    </source>
</reference>
<reference key="3">
    <citation type="journal article" date="2009" name="Proc. Natl. Acad. Sci. U.S.A.">
        <title>Molecular basis of pyoverdine siderophore recycling in Pseudomonas aeruginosa.</title>
        <authorList>
            <person name="Imperi F."/>
            <person name="Tiburzi F."/>
            <person name="Visca P."/>
        </authorList>
    </citation>
    <scope>FUNCTION</scope>
    <scope>SUBUNIT</scope>
    <scope>INDUCTION</scope>
    <scope>DISRUPTION PHENOTYPE</scope>
    <source>
        <strain>ATCC 15692 / DSM 22644 / CIP 104116 / JCM 14847 / LMG 12228 / 1C / PRS 101 / PAO1</strain>
    </source>
</reference>
<reference key="4">
    <citation type="journal article" date="2010" name="Environ. Microbiol. Rep.">
        <title>An efflux pump is required for siderophore recycling by Pseudomonas aeruginosa.</title>
        <authorList>
            <person name="Yeterian E."/>
            <person name="Martin L.W."/>
            <person name="Lamont I.L."/>
            <person name="Schalk I.J."/>
        </authorList>
    </citation>
    <scope>FUNCTION</scope>
    <scope>SUBUNIT</scope>
    <scope>DISRUPTION PHENOTYPE</scope>
    <source>
        <strain>ATCC 15692 / DSM 22644 / CIP 104116 / JCM 14847 / LMG 12228 / 1C / PRS 101 / PAO1</strain>
    </source>
</reference>
<reference key="5">
    <citation type="journal article" date="2010" name="FEBS Lett.">
        <title>An efflux pump is involved in secretion of newly synthesized siderophore by Pseudomonas aeruginosa.</title>
        <authorList>
            <person name="Hannauer M."/>
            <person name="Yeterian E."/>
            <person name="Martin L.W."/>
            <person name="Lamont I.L."/>
            <person name="Schalk I.J."/>
        </authorList>
    </citation>
    <scope>FUNCTION IN SECRETION OF NEWLY SYNTHESIZED PYOVERDINE</scope>
    <scope>SUBUNIT</scope>
    <scope>DISRUPTION PHENOTYPE</scope>
    <source>
        <strain>ATCC 15692 / DSM 22644 / CIP 104116 / JCM 14847 / LMG 12228 / 1C / PRS 101 / PAO1</strain>
    </source>
</reference>
<reference key="6">
    <citation type="journal article" date="2012" name="Environ. Microbiol.">
        <title>The PvdRT-OpmQ efflux pump controls the metal selectivity of the iron uptake pathway mediated by the siderophore pyoverdine in Pseudomonas aeruginosa.</title>
        <authorList>
            <person name="Hannauer M."/>
            <person name="Braud A."/>
            <person name="Hoegy F."/>
            <person name="Ronot P."/>
            <person name="Boos A."/>
            <person name="Schalk I.J."/>
        </authorList>
    </citation>
    <scope>FUNCTION IN EXPORT OF UNWANTED METALS COMPLEXED WITH PVD</scope>
    <scope>DISRUPTION PHENOTYPE</scope>
    <source>
        <strain>ATCC 15692 / DSM 22644 / CIP 104116 / JCM 14847 / LMG 12228 / 1C / PRS 101 / PAO1</strain>
    </source>
</reference>
<sequence>MENATQPVPLIELRDIRKRYGGNGTPEVEVLKGVSLSIHAGEFVAIVGASGSGKSTLMNILGCLDRPSSGSYHFAGHDVAELDSDEQAWLRREAFGFVFQGYHLIPSASAQENVEMPAIYAGIPASERHTRARALLERLGLAERTANRPHQLSGGQQQRVSIARALMNGGHIILADEPTGALDSHSGAEVMALLDELASQGHVVILITHDRDVAARAKRIIEVRDGEIVSDSANDERPAHPSAGVERHLQADDLSQRLAEGSSEPSGAWRAELLEAVRAAWRVMWINRFRTALTLLGIIIGVASVVVMLAVGEGSKRQVMAQMGAFGSNIIYLSGYSPNPRAPMGIVSSDDVAAIATLPQVKKVMPVNGGELVVRYGNIDYHAYVGGNNTDFPEILNWPVAEGSYFTERDEDAATTVAVIGYKVRKKLFGSANPIGRYILIENVPFQVIGVLAEKGSSSGDKDADNRIAIPYSAASIRLFGTRNPEYVIIAAADAQRVHQAERAIDQLMLRLHRGQRDYELTNNAAMIQAEAKTQNTLSLMLGSIAAISLLVGGIGVMNIMLMTVRERTREIGIRMATGARQGDILRQFLTEAAMLSVVGGLAGIALALCIGGVLLLGQVAVAFSLSAIVGAFSCALVTGLVFGFMPARKAAQLDPVAALASQ</sequence>
<accession>Q9I190</accession>
<accession>Q5DIQ4</accession>
<accession>Q5DIS1</accession>
<accession>Q5DIV0</accession>
<dbReference type="EC" id="7.6.2.-" evidence="9"/>
<dbReference type="EMBL" id="AY765260">
    <property type="protein sequence ID" value="AAX16304.1"/>
    <property type="molecule type" value="Genomic_DNA"/>
</dbReference>
<dbReference type="EMBL" id="AY765262">
    <property type="protein sequence ID" value="AAX16333.1"/>
    <property type="molecule type" value="Genomic_DNA"/>
</dbReference>
<dbReference type="EMBL" id="AY765263">
    <property type="protein sequence ID" value="AAX16350.1"/>
    <property type="molecule type" value="Genomic_DNA"/>
</dbReference>
<dbReference type="EMBL" id="AE004091">
    <property type="protein sequence ID" value="AAG05778.1"/>
    <property type="molecule type" value="Genomic_DNA"/>
</dbReference>
<dbReference type="PIR" id="H83346">
    <property type="entry name" value="H83346"/>
</dbReference>
<dbReference type="RefSeq" id="NP_251080.1">
    <property type="nucleotide sequence ID" value="NC_002516.2"/>
</dbReference>
<dbReference type="RefSeq" id="WP_003114506.1">
    <property type="nucleotide sequence ID" value="NZ_QZGE01000021.1"/>
</dbReference>
<dbReference type="SMR" id="Q9I190"/>
<dbReference type="FunCoup" id="Q9I190">
    <property type="interactions" value="350"/>
</dbReference>
<dbReference type="STRING" id="208964.PA2390"/>
<dbReference type="PaxDb" id="208964-PA2390"/>
<dbReference type="GeneID" id="882237"/>
<dbReference type="KEGG" id="pae:PA2390"/>
<dbReference type="PATRIC" id="fig|208964.12.peg.2501"/>
<dbReference type="PseudoCAP" id="PA2390"/>
<dbReference type="HOGENOM" id="CLU_000604_78_2_6"/>
<dbReference type="InParanoid" id="Q9I190"/>
<dbReference type="OrthoDB" id="9770036at2"/>
<dbReference type="PhylomeDB" id="Q9I190"/>
<dbReference type="BioCyc" id="PAER208964:G1FZ6-2428-MONOMER"/>
<dbReference type="Proteomes" id="UP000002438">
    <property type="component" value="Chromosome"/>
</dbReference>
<dbReference type="GO" id="GO:1990281">
    <property type="term" value="C:efflux pump complex"/>
    <property type="evidence" value="ECO:0000314"/>
    <property type="project" value="PseudoCAP"/>
</dbReference>
<dbReference type="GO" id="GO:0005886">
    <property type="term" value="C:plasma membrane"/>
    <property type="evidence" value="ECO:0000318"/>
    <property type="project" value="GO_Central"/>
</dbReference>
<dbReference type="GO" id="GO:0005524">
    <property type="term" value="F:ATP binding"/>
    <property type="evidence" value="ECO:0007669"/>
    <property type="project" value="UniProtKB-KW"/>
</dbReference>
<dbReference type="GO" id="GO:0016887">
    <property type="term" value="F:ATP hydrolysis activity"/>
    <property type="evidence" value="ECO:0007669"/>
    <property type="project" value="InterPro"/>
</dbReference>
<dbReference type="GO" id="GO:0015562">
    <property type="term" value="F:efflux transmembrane transporter activity"/>
    <property type="evidence" value="ECO:0000314"/>
    <property type="project" value="PseudoCAP"/>
</dbReference>
<dbReference type="GO" id="GO:0022857">
    <property type="term" value="F:transmembrane transporter activity"/>
    <property type="evidence" value="ECO:0000318"/>
    <property type="project" value="GO_Central"/>
</dbReference>
<dbReference type="GO" id="GO:0002049">
    <property type="term" value="P:pyoverdine biosynthetic process"/>
    <property type="evidence" value="ECO:0000315"/>
    <property type="project" value="PseudoCAP"/>
</dbReference>
<dbReference type="CDD" id="cd03255">
    <property type="entry name" value="ABC_MJ0796_LolCDE_FtsE"/>
    <property type="match status" value="1"/>
</dbReference>
<dbReference type="FunFam" id="3.40.50.300:FF:000032">
    <property type="entry name" value="Export ABC transporter ATP-binding protein"/>
    <property type="match status" value="1"/>
</dbReference>
<dbReference type="Gene3D" id="3.40.50.300">
    <property type="entry name" value="P-loop containing nucleotide triphosphate hydrolases"/>
    <property type="match status" value="1"/>
</dbReference>
<dbReference type="InterPro" id="IPR003593">
    <property type="entry name" value="AAA+_ATPase"/>
</dbReference>
<dbReference type="InterPro" id="IPR003838">
    <property type="entry name" value="ABC3_permease_C"/>
</dbReference>
<dbReference type="InterPro" id="IPR003439">
    <property type="entry name" value="ABC_transporter-like_ATP-bd"/>
</dbReference>
<dbReference type="InterPro" id="IPR017871">
    <property type="entry name" value="ABC_transporter-like_CS"/>
</dbReference>
<dbReference type="InterPro" id="IPR017911">
    <property type="entry name" value="MacB-like_ATP-bd"/>
</dbReference>
<dbReference type="InterPro" id="IPR025857">
    <property type="entry name" value="MacB_PCD"/>
</dbReference>
<dbReference type="InterPro" id="IPR050250">
    <property type="entry name" value="Macrolide_Exporter_MacB"/>
</dbReference>
<dbReference type="InterPro" id="IPR027417">
    <property type="entry name" value="P-loop_NTPase"/>
</dbReference>
<dbReference type="PANTHER" id="PTHR30572:SF14">
    <property type="entry name" value="MACROLIDE EXPORT ATP-BINDING_PERMEASE PROTEIN MACB"/>
    <property type="match status" value="1"/>
</dbReference>
<dbReference type="PANTHER" id="PTHR30572">
    <property type="entry name" value="MEMBRANE COMPONENT OF TRANSPORTER-RELATED"/>
    <property type="match status" value="1"/>
</dbReference>
<dbReference type="Pfam" id="PF00005">
    <property type="entry name" value="ABC_tran"/>
    <property type="match status" value="1"/>
</dbReference>
<dbReference type="Pfam" id="PF02687">
    <property type="entry name" value="FtsX"/>
    <property type="match status" value="1"/>
</dbReference>
<dbReference type="Pfam" id="PF12704">
    <property type="entry name" value="MacB_PCD"/>
    <property type="match status" value="1"/>
</dbReference>
<dbReference type="SMART" id="SM00382">
    <property type="entry name" value="AAA"/>
    <property type="match status" value="1"/>
</dbReference>
<dbReference type="SUPFAM" id="SSF52540">
    <property type="entry name" value="P-loop containing nucleoside triphosphate hydrolases"/>
    <property type="match status" value="1"/>
</dbReference>
<dbReference type="PROSITE" id="PS00211">
    <property type="entry name" value="ABC_TRANSPORTER_1"/>
    <property type="match status" value="1"/>
</dbReference>
<dbReference type="PROSITE" id="PS50893">
    <property type="entry name" value="ABC_TRANSPORTER_2"/>
    <property type="match status" value="1"/>
</dbReference>
<dbReference type="PROSITE" id="PS51267">
    <property type="entry name" value="MACB"/>
    <property type="match status" value="1"/>
</dbReference>
<gene>
    <name evidence="8" type="primary">pvdT</name>
    <name evidence="11" type="ordered locus">PA2390</name>
</gene>
<evidence type="ECO:0000250" key="1">
    <source>
        <dbReference type="UniProtKB" id="Q88F88"/>
    </source>
</evidence>
<evidence type="ECO:0000255" key="2"/>
<evidence type="ECO:0000255" key="3">
    <source>
        <dbReference type="PROSITE-ProRule" id="PRU00434"/>
    </source>
</evidence>
<evidence type="ECO:0000269" key="4">
    <source>
    </source>
</evidence>
<evidence type="ECO:0000269" key="5">
    <source>
    </source>
</evidence>
<evidence type="ECO:0000269" key="6">
    <source>
    </source>
</evidence>
<evidence type="ECO:0000269" key="7">
    <source>
    </source>
</evidence>
<evidence type="ECO:0000303" key="8">
    <source>
    </source>
</evidence>
<evidence type="ECO:0000305" key="9"/>
<evidence type="ECO:0000305" key="10">
    <source>
    </source>
</evidence>
<evidence type="ECO:0000312" key="11">
    <source>
        <dbReference type="EMBL" id="AAG05778.1"/>
    </source>
</evidence>